<gene>
    <name type="primary">UAP1</name>
    <name type="ordered locus">ECU11_1780</name>
</gene>
<name>UAP1_ENCCU</name>
<sequence>MGYISMNSTNLIRPYEGTELNDAGRKYKKIGERLLREKKLGVVILSGGQGTRLGSDEPKGLFKIKGKTLFEWHMETIKELISKYNADIAVFIMTSSFTDEAVRKYFQSTDFGLKIQFFKQRNSLCVGTDGKPLEWYDGHAESPYGNGDIFNAIQQVNLEGIEALNVICIDNVLAKILDPVFVGAFYSDDYDILSKSVTKEEKESVGAFLMDERLKIKEYSENDAKGEGIQGNICNHIFKTSFIKKMKNINLPEHKAFKKIPYTISGKLIKPVKPNGFKKETFIFDSFEYTQKNGVMNVPREKEFSPLKNGMDSSVDNPVTCTIAVERHRIKTTIQ</sequence>
<accession>Q8SQS1</accession>
<feature type="chain" id="PRO_0000381748" description="Probable UDP-N-acetylglucosamine pyrophosphorylase">
    <location>
        <begin position="1"/>
        <end position="335"/>
    </location>
</feature>
<feature type="short sequence motif" description="Substrate binding" evidence="1">
    <location>
        <begin position="45"/>
        <end position="48"/>
    </location>
</feature>
<feature type="short sequence motif" description="Substrate binding" evidence="1">
    <location>
        <begin position="218"/>
        <end position="219"/>
    </location>
</feature>
<feature type="binding site" evidence="2">
    <location>
        <begin position="45"/>
        <end position="48"/>
    </location>
    <ligand>
        <name>UTP</name>
        <dbReference type="ChEBI" id="CHEBI:46398"/>
    </ligand>
</feature>
<feature type="binding site" evidence="2">
    <location>
        <position position="59"/>
    </location>
    <ligand>
        <name>UTP</name>
        <dbReference type="ChEBI" id="CHEBI:46398"/>
    </ligand>
</feature>
<feature type="binding site" evidence="2">
    <location>
        <position position="120"/>
    </location>
    <ligand>
        <name>UTP</name>
        <dbReference type="ChEBI" id="CHEBI:46398"/>
    </ligand>
</feature>
<feature type="binding site" evidence="2">
    <location>
        <position position="145"/>
    </location>
    <ligand>
        <name>UTP</name>
        <dbReference type="ChEBI" id="CHEBI:46398"/>
    </ligand>
</feature>
<feature type="binding site" evidence="1">
    <location>
        <position position="146"/>
    </location>
    <ligand>
        <name>substrate</name>
    </ligand>
</feature>
<feature type="binding site" evidence="2">
    <location>
        <position position="170"/>
    </location>
    <ligand>
        <name>UTP</name>
        <dbReference type="ChEBI" id="CHEBI:46398"/>
    </ligand>
</feature>
<feature type="binding site" evidence="2">
    <location>
        <position position="278"/>
    </location>
    <ligand>
        <name>UTP</name>
        <dbReference type="ChEBI" id="CHEBI:46398"/>
    </ligand>
</feature>
<feature type="binding site" evidence="1">
    <location>
        <position position="308"/>
    </location>
    <ligand>
        <name>substrate</name>
    </ligand>
</feature>
<organism>
    <name type="scientific">Encephalitozoon cuniculi (strain GB-M1)</name>
    <name type="common">Microsporidian parasite</name>
    <dbReference type="NCBI Taxonomy" id="284813"/>
    <lineage>
        <taxon>Eukaryota</taxon>
        <taxon>Fungi</taxon>
        <taxon>Fungi incertae sedis</taxon>
        <taxon>Microsporidia</taxon>
        <taxon>Unikaryonidae</taxon>
        <taxon>Encephalitozoon</taxon>
    </lineage>
</organism>
<dbReference type="EC" id="2.7.7.23"/>
<dbReference type="EMBL" id="AL590450">
    <property type="protein sequence ID" value="CAD26088.1"/>
    <property type="molecule type" value="Genomic_DNA"/>
</dbReference>
<dbReference type="RefSeq" id="NP_586484.1">
    <property type="nucleotide sequence ID" value="NM_001042317.1"/>
</dbReference>
<dbReference type="SMR" id="Q8SQS1"/>
<dbReference type="FunCoup" id="Q8SQS1">
    <property type="interactions" value="51"/>
</dbReference>
<dbReference type="STRING" id="284813.Q8SQS1"/>
<dbReference type="GeneID" id="860138"/>
<dbReference type="KEGG" id="ecu:ECU11_1780"/>
<dbReference type="VEuPathDB" id="MicrosporidiaDB:ECU11_1780"/>
<dbReference type="HOGENOM" id="CLU_025603_1_2_1"/>
<dbReference type="InParanoid" id="Q8SQS1"/>
<dbReference type="OMA" id="ANICHHY"/>
<dbReference type="OrthoDB" id="532420at2759"/>
<dbReference type="UniPathway" id="UPA00113">
    <property type="reaction ID" value="UER00533"/>
</dbReference>
<dbReference type="Proteomes" id="UP000000819">
    <property type="component" value="Chromosome XI"/>
</dbReference>
<dbReference type="GO" id="GO:0005737">
    <property type="term" value="C:cytoplasm"/>
    <property type="evidence" value="ECO:0007669"/>
    <property type="project" value="UniProtKB-SubCell"/>
</dbReference>
<dbReference type="GO" id="GO:0003977">
    <property type="term" value="F:UDP-N-acetylglucosamine diphosphorylase activity"/>
    <property type="evidence" value="ECO:0007669"/>
    <property type="project" value="UniProtKB-EC"/>
</dbReference>
<dbReference type="GO" id="GO:0006048">
    <property type="term" value="P:UDP-N-acetylglucosamine biosynthetic process"/>
    <property type="evidence" value="ECO:0007669"/>
    <property type="project" value="UniProtKB-UniPathway"/>
</dbReference>
<dbReference type="Gene3D" id="3.90.550.10">
    <property type="entry name" value="Spore Coat Polysaccharide Biosynthesis Protein SpsA, Chain A"/>
    <property type="match status" value="1"/>
</dbReference>
<dbReference type="InterPro" id="IPR029044">
    <property type="entry name" value="Nucleotide-diphossugar_trans"/>
</dbReference>
<dbReference type="InterPro" id="IPR039741">
    <property type="entry name" value="UDP-sugar_pyrophosphorylase"/>
</dbReference>
<dbReference type="InterPro" id="IPR002618">
    <property type="entry name" value="UDPGP_fam"/>
</dbReference>
<dbReference type="PANTHER" id="PTHR11952:SF2">
    <property type="entry name" value="LD24639P"/>
    <property type="match status" value="1"/>
</dbReference>
<dbReference type="PANTHER" id="PTHR11952">
    <property type="entry name" value="UDP- GLUCOSE PYROPHOSPHORYLASE"/>
    <property type="match status" value="1"/>
</dbReference>
<dbReference type="Pfam" id="PF01704">
    <property type="entry name" value="UDPGP"/>
    <property type="match status" value="1"/>
</dbReference>
<dbReference type="SUPFAM" id="SSF53448">
    <property type="entry name" value="Nucleotide-diphospho-sugar transferases"/>
    <property type="match status" value="1"/>
</dbReference>
<proteinExistence type="evidence at protein level"/>
<keyword id="KW-0963">Cytoplasm</keyword>
<keyword id="KW-0548">Nucleotidyltransferase</keyword>
<keyword id="KW-1185">Reference proteome</keyword>
<keyword id="KW-0808">Transferase</keyword>
<reference key="1">
    <citation type="journal article" date="2001" name="Nature">
        <title>Genome sequence and gene compaction of the eukaryote parasite Encephalitozoon cuniculi.</title>
        <authorList>
            <person name="Katinka M.D."/>
            <person name="Duprat S."/>
            <person name="Cornillot E."/>
            <person name="Metenier G."/>
            <person name="Thomarat F."/>
            <person name="Prensier G."/>
            <person name="Barbe V."/>
            <person name="Peyretaillade E."/>
            <person name="Brottier P."/>
            <person name="Wincker P."/>
            <person name="Delbac F."/>
            <person name="El Alaoui H."/>
            <person name="Peyret P."/>
            <person name="Saurin W."/>
            <person name="Gouy M."/>
            <person name="Weissenbach J."/>
            <person name="Vivares C.P."/>
        </authorList>
    </citation>
    <scope>NUCLEOTIDE SEQUENCE [LARGE SCALE GENOMIC DNA]</scope>
    <source>
        <strain>GB-M1</strain>
    </source>
</reference>
<reference key="2">
    <citation type="journal article" date="2006" name="Proteomics">
        <title>Proteomic analysis of the eukaryotic parasite Encephalitozoon cuniculi (microsporidia): a reference map for proteins expressed in late sporogonial stages.</title>
        <authorList>
            <person name="Brosson D."/>
            <person name="Kuhn L."/>
            <person name="Delbac F."/>
            <person name="Garin J."/>
            <person name="Vivares C.P."/>
            <person name="Texier C."/>
        </authorList>
    </citation>
    <scope>IDENTIFICATION BY MASS SPECTROMETRY [LARGE SCALE ANALYSIS]</scope>
    <scope>DEVELOPMENTAL STAGE</scope>
</reference>
<comment type="catalytic activity">
    <reaction>
        <text>N-acetyl-alpha-D-glucosamine 1-phosphate + UTP + H(+) = UDP-N-acetyl-alpha-D-glucosamine + diphosphate</text>
        <dbReference type="Rhea" id="RHEA:13509"/>
        <dbReference type="ChEBI" id="CHEBI:15378"/>
        <dbReference type="ChEBI" id="CHEBI:33019"/>
        <dbReference type="ChEBI" id="CHEBI:46398"/>
        <dbReference type="ChEBI" id="CHEBI:57705"/>
        <dbReference type="ChEBI" id="CHEBI:57776"/>
        <dbReference type="EC" id="2.7.7.23"/>
    </reaction>
</comment>
<comment type="pathway">
    <text>Nucleotide-sugar biosynthesis; UDP-N-acetyl-alpha-D-glucosamine biosynthesis; UDP-N-acetyl-alpha-D-glucosamine from N-acetyl-alpha-D-glucosamine 1-phosphate: step 1/1.</text>
</comment>
<comment type="subcellular location">
    <subcellularLocation>
        <location evidence="1">Cytoplasm</location>
    </subcellularLocation>
</comment>
<comment type="developmental stage">
    <text evidence="3">Expressed in late sporogonial stages.</text>
</comment>
<comment type="similarity">
    <text evidence="4">Belongs to the UDPGP type 1 family.</text>
</comment>
<evidence type="ECO:0000250" key="1"/>
<evidence type="ECO:0000250" key="2">
    <source>
        <dbReference type="UniProtKB" id="Q9M9P3"/>
    </source>
</evidence>
<evidence type="ECO:0000269" key="3">
    <source>
    </source>
</evidence>
<evidence type="ECO:0000305" key="4"/>
<protein>
    <recommendedName>
        <fullName>Probable UDP-N-acetylglucosamine pyrophosphorylase</fullName>
        <ecNumber>2.7.7.23</ecNumber>
    </recommendedName>
</protein>